<keyword id="KW-1015">Disulfide bond</keyword>
<keyword id="KW-0256">Endoplasmic reticulum</keyword>
<keyword id="KW-0413">Isomerase</keyword>
<keyword id="KW-0676">Redox-active center</keyword>
<keyword id="KW-1185">Reference proteome</keyword>
<keyword id="KW-0677">Repeat</keyword>
<keyword id="KW-0732">Signal</keyword>
<keyword id="KW-0346">Stress response</keyword>
<organism>
    <name type="scientific">Neurospora crassa (strain ATCC 24698 / 74-OR23-1A / CBS 708.71 / DSM 1257 / FGSC 987)</name>
    <dbReference type="NCBI Taxonomy" id="367110"/>
    <lineage>
        <taxon>Eukaryota</taxon>
        <taxon>Fungi</taxon>
        <taxon>Dikarya</taxon>
        <taxon>Ascomycota</taxon>
        <taxon>Pezizomycotina</taxon>
        <taxon>Sordariomycetes</taxon>
        <taxon>Sordariomycetidae</taxon>
        <taxon>Sordariales</taxon>
        <taxon>Sordariaceae</taxon>
        <taxon>Neurospora</taxon>
    </lineage>
</organism>
<proteinExistence type="evidence at transcript level"/>
<feature type="signal peptide" evidence="2">
    <location>
        <begin position="1"/>
        <end position="18"/>
    </location>
</feature>
<feature type="chain" id="PRO_0000034244" description="Protein disulfide-isomerase erp38">
    <location>
        <begin position="19"/>
        <end position="369"/>
    </location>
</feature>
<feature type="domain" description="Thioredoxin 1" evidence="3">
    <location>
        <begin position="19"/>
        <end position="130"/>
    </location>
</feature>
<feature type="domain" description="Thioredoxin 2" evidence="3">
    <location>
        <begin position="131"/>
        <end position="251"/>
    </location>
</feature>
<feature type="short sequence motif" description="Prevents secretion from ER" evidence="4">
    <location>
        <begin position="366"/>
        <end position="369"/>
    </location>
</feature>
<feature type="active site" description="Nucleophile" evidence="1">
    <location>
        <position position="50"/>
    </location>
</feature>
<feature type="active site" description="Nucleophile" evidence="1">
    <location>
        <position position="53"/>
    </location>
</feature>
<feature type="active site" description="Nucleophile" evidence="1">
    <location>
        <position position="170"/>
    </location>
</feature>
<feature type="active site" description="Nucleophile" evidence="1">
    <location>
        <position position="173"/>
    </location>
</feature>
<feature type="site" description="Contributes to redox potential value" evidence="1">
    <location>
        <position position="51"/>
    </location>
</feature>
<feature type="site" description="Contributes to redox potential value" evidence="1">
    <location>
        <position position="52"/>
    </location>
</feature>
<feature type="site" description="Lowers pKa of C-terminal Cys of first active site" evidence="1">
    <location>
        <position position="116"/>
    </location>
</feature>
<feature type="site" description="Contributes to redox potential value" evidence="1">
    <location>
        <position position="171"/>
    </location>
</feature>
<feature type="site" description="Contributes to redox potential value" evidence="1">
    <location>
        <position position="172"/>
    </location>
</feature>
<feature type="site" description="Lowers pKa of C-terminal Cys of second active site" evidence="1">
    <location>
        <position position="237"/>
    </location>
</feature>
<feature type="disulfide bond" description="Redox-active" evidence="3">
    <location>
        <begin position="50"/>
        <end position="53"/>
    </location>
</feature>
<feature type="disulfide bond" description="Redox-active" evidence="3">
    <location>
        <begin position="170"/>
        <end position="173"/>
    </location>
</feature>
<feature type="sequence conflict" description="In Ref. 1; CAA68847." evidence="5" ref="1">
    <original>A</original>
    <variation>P</variation>
    <location>
        <position position="154"/>
    </location>
</feature>
<protein>
    <recommendedName>
        <fullName>Protein disulfide-isomerase erp38</fullName>
        <shortName>ERp38</shortName>
        <ecNumber>5.3.4.1</ecNumber>
    </recommendedName>
</protein>
<reference key="1">
    <citation type="journal article" date="1997" name="Gene">
        <title>Isolation and characterisation of a novel stress-inducible PDI-family gene from Aspergillus niger.</title>
        <authorList>
            <person name="Jeenes D.J."/>
            <person name="Pfaller R."/>
            <person name="Archer D.B."/>
        </authorList>
    </citation>
    <scope>NUCLEOTIDE SEQUENCE [MRNA]</scope>
</reference>
<reference key="2">
    <citation type="journal article" date="2003" name="Nucleic Acids Res.">
        <title>What's in the genome of a filamentous fungus? Analysis of the Neurospora genome sequence.</title>
        <authorList>
            <person name="Mannhaupt G."/>
            <person name="Montrone C."/>
            <person name="Haase D."/>
            <person name="Mewes H.-W."/>
            <person name="Aign V."/>
            <person name="Hoheisel J.D."/>
            <person name="Fartmann B."/>
            <person name="Nyakatura G."/>
            <person name="Kempken F."/>
            <person name="Maier J."/>
            <person name="Schulte U."/>
        </authorList>
    </citation>
    <scope>NUCLEOTIDE SEQUENCE [LARGE SCALE GENOMIC DNA]</scope>
    <source>
        <strain>ATCC 24698 / 74-OR23-1A / CBS 708.71 / DSM 1257 / FGSC 987</strain>
    </source>
</reference>
<reference key="3">
    <citation type="journal article" date="2003" name="Nature">
        <title>The genome sequence of the filamentous fungus Neurospora crassa.</title>
        <authorList>
            <person name="Galagan J.E."/>
            <person name="Calvo S.E."/>
            <person name="Borkovich K.A."/>
            <person name="Selker E.U."/>
            <person name="Read N.D."/>
            <person name="Jaffe D.B."/>
            <person name="FitzHugh W."/>
            <person name="Ma L.-J."/>
            <person name="Smirnov S."/>
            <person name="Purcell S."/>
            <person name="Rehman B."/>
            <person name="Elkins T."/>
            <person name="Engels R."/>
            <person name="Wang S."/>
            <person name="Nielsen C.B."/>
            <person name="Butler J."/>
            <person name="Endrizzi M."/>
            <person name="Qui D."/>
            <person name="Ianakiev P."/>
            <person name="Bell-Pedersen D."/>
            <person name="Nelson M.A."/>
            <person name="Werner-Washburne M."/>
            <person name="Selitrennikoff C.P."/>
            <person name="Kinsey J.A."/>
            <person name="Braun E.L."/>
            <person name="Zelter A."/>
            <person name="Schulte U."/>
            <person name="Kothe G.O."/>
            <person name="Jedd G."/>
            <person name="Mewes H.-W."/>
            <person name="Staben C."/>
            <person name="Marcotte E."/>
            <person name="Greenberg D."/>
            <person name="Roy A."/>
            <person name="Foley K."/>
            <person name="Naylor J."/>
            <person name="Stange-Thomann N."/>
            <person name="Barrett R."/>
            <person name="Gnerre S."/>
            <person name="Kamal M."/>
            <person name="Kamvysselis M."/>
            <person name="Mauceli E.W."/>
            <person name="Bielke C."/>
            <person name="Rudd S."/>
            <person name="Frishman D."/>
            <person name="Krystofova S."/>
            <person name="Rasmussen C."/>
            <person name="Metzenberg R.L."/>
            <person name="Perkins D.D."/>
            <person name="Kroken S."/>
            <person name="Cogoni C."/>
            <person name="Macino G."/>
            <person name="Catcheside D.E.A."/>
            <person name="Li W."/>
            <person name="Pratt R.J."/>
            <person name="Osmani S.A."/>
            <person name="DeSouza C.P.C."/>
            <person name="Glass N.L."/>
            <person name="Orbach M.J."/>
            <person name="Berglund J.A."/>
            <person name="Voelker R."/>
            <person name="Yarden O."/>
            <person name="Plamann M."/>
            <person name="Seiler S."/>
            <person name="Dunlap J.C."/>
            <person name="Radford A."/>
            <person name="Aramayo R."/>
            <person name="Natvig D.O."/>
            <person name="Alex L.A."/>
            <person name="Mannhaupt G."/>
            <person name="Ebbole D.J."/>
            <person name="Freitag M."/>
            <person name="Paulsen I."/>
            <person name="Sachs M.S."/>
            <person name="Lander E.S."/>
            <person name="Nusbaum C."/>
            <person name="Birren B.W."/>
        </authorList>
    </citation>
    <scope>NUCLEOTIDE SEQUENCE [LARGE SCALE GENOMIC DNA]</scope>
    <source>
        <strain>ATCC 24698 / 74-OR23-1A / CBS 708.71 / DSM 1257 / FGSC 987</strain>
    </source>
</reference>
<sequence>MVLLKSLVVASLAAAVAAKSAVLDLIPSNFDDVVLKSGKPTLVEFFAPWCGHCKNLAPVYEELATALEYAKDKVQIAKVDADAERALGKRFGVQGFPTLKFFDGKSEQPVDYKGGRDLDSLSNFIAEKTGVKARKKGSAPSLVNILNDATIKGAIGGDKNVLVAFTAPWCGHCKNLAPTWEKLAATFASDPEITIAKVDADAPTGKKSAAEYGVSGFPTIKFFPKGSTTPEDYNGGRSEADLVKFLNEKAGTHRTPGGGLDTVAGTIAALDEIVAKYTGGASLAEVAEEAKEAVKSLKNSAELKYADYYLRVLDKLSKSEGYATKEFARLEGILKKGGLAPAKVDELTVKVNVLRKFVEKAAEEAKEEL</sequence>
<accession>Q92249</accession>
<accession>Q7RVD7</accession>
<accession>Q9C2P3</accession>
<name>ERP38_NEUCR</name>
<evidence type="ECO:0000250" key="1"/>
<evidence type="ECO:0000255" key="2"/>
<evidence type="ECO:0000255" key="3">
    <source>
        <dbReference type="PROSITE-ProRule" id="PRU00691"/>
    </source>
</evidence>
<evidence type="ECO:0000255" key="4">
    <source>
        <dbReference type="PROSITE-ProRule" id="PRU10138"/>
    </source>
</evidence>
<evidence type="ECO:0000305" key="5"/>
<dbReference type="EC" id="5.3.4.1"/>
<dbReference type="EMBL" id="Y07562">
    <property type="protein sequence ID" value="CAA68847.1"/>
    <property type="molecule type" value="mRNA"/>
</dbReference>
<dbReference type="EMBL" id="AL513467">
    <property type="protein sequence ID" value="CAC28831.1"/>
    <property type="molecule type" value="Genomic_DNA"/>
</dbReference>
<dbReference type="EMBL" id="CM002240">
    <property type="protein sequence ID" value="EAA32279.1"/>
    <property type="molecule type" value="Genomic_DNA"/>
</dbReference>
<dbReference type="PIR" id="T47259">
    <property type="entry name" value="T47259"/>
</dbReference>
<dbReference type="RefSeq" id="XP_961515.1">
    <property type="nucleotide sequence ID" value="XM_956422.3"/>
</dbReference>
<dbReference type="SMR" id="Q92249"/>
<dbReference type="IntAct" id="Q92249">
    <property type="interactions" value="4"/>
</dbReference>
<dbReference type="MINT" id="Q92249"/>
<dbReference type="STRING" id="367110.Q92249"/>
<dbReference type="PaxDb" id="5141-EFNCRP00000003391"/>
<dbReference type="EnsemblFungi" id="EAA32279">
    <property type="protein sequence ID" value="EAA32279"/>
    <property type="gene ID" value="NCU03739"/>
</dbReference>
<dbReference type="GeneID" id="3877590"/>
<dbReference type="KEGG" id="ncr:NCU03739"/>
<dbReference type="VEuPathDB" id="FungiDB:NCU03739"/>
<dbReference type="HOGENOM" id="CLU_038617_1_1_1"/>
<dbReference type="InParanoid" id="Q92249"/>
<dbReference type="OMA" id="FINEHAG"/>
<dbReference type="OrthoDB" id="10264505at2759"/>
<dbReference type="Proteomes" id="UP000001805">
    <property type="component" value="Chromosome 2, Linkage Group V"/>
</dbReference>
<dbReference type="GO" id="GO:0005783">
    <property type="term" value="C:endoplasmic reticulum"/>
    <property type="evidence" value="ECO:0000318"/>
    <property type="project" value="GO_Central"/>
</dbReference>
<dbReference type="GO" id="GO:0005788">
    <property type="term" value="C:endoplasmic reticulum lumen"/>
    <property type="evidence" value="ECO:0007669"/>
    <property type="project" value="UniProtKB-SubCell"/>
</dbReference>
<dbReference type="GO" id="GO:0003756">
    <property type="term" value="F:protein disulfide isomerase activity"/>
    <property type="evidence" value="ECO:0000318"/>
    <property type="project" value="GO_Central"/>
</dbReference>
<dbReference type="GO" id="GO:0006457">
    <property type="term" value="P:protein folding"/>
    <property type="evidence" value="ECO:0000318"/>
    <property type="project" value="GO_Central"/>
</dbReference>
<dbReference type="CDD" id="cd00238">
    <property type="entry name" value="ERp29c"/>
    <property type="match status" value="1"/>
</dbReference>
<dbReference type="CDD" id="cd02998">
    <property type="entry name" value="PDI_a_ERp38"/>
    <property type="match status" value="2"/>
</dbReference>
<dbReference type="FunFam" id="3.40.30.10:FF:000032">
    <property type="entry name" value="Protein disulfide-isomerase A6 homolog"/>
    <property type="match status" value="1"/>
</dbReference>
<dbReference type="Gene3D" id="1.20.1150.12">
    <property type="entry name" value="Endoplasmic reticulum resident protein 29, C-terminal domain"/>
    <property type="match status" value="1"/>
</dbReference>
<dbReference type="Gene3D" id="3.40.30.10">
    <property type="entry name" value="Glutaredoxin"/>
    <property type="match status" value="2"/>
</dbReference>
<dbReference type="InterPro" id="IPR011679">
    <property type="entry name" value="ERp29_C"/>
</dbReference>
<dbReference type="InterPro" id="IPR036356">
    <property type="entry name" value="ERp29_C_sf"/>
</dbReference>
<dbReference type="InterPro" id="IPR051063">
    <property type="entry name" value="PDI"/>
</dbReference>
<dbReference type="InterPro" id="IPR005788">
    <property type="entry name" value="PDI_thioredoxin-like_dom"/>
</dbReference>
<dbReference type="InterPro" id="IPR036249">
    <property type="entry name" value="Thioredoxin-like_sf"/>
</dbReference>
<dbReference type="InterPro" id="IPR017937">
    <property type="entry name" value="Thioredoxin_CS"/>
</dbReference>
<dbReference type="InterPro" id="IPR013766">
    <property type="entry name" value="Thioredoxin_domain"/>
</dbReference>
<dbReference type="NCBIfam" id="TIGR01126">
    <property type="entry name" value="pdi_dom"/>
    <property type="match status" value="2"/>
</dbReference>
<dbReference type="PANTHER" id="PTHR45672:SF11">
    <property type="entry name" value="PROTEIN DISULFIDE-ISOMERASE C17H9.14C"/>
    <property type="match status" value="1"/>
</dbReference>
<dbReference type="PANTHER" id="PTHR45672">
    <property type="entry name" value="PROTEIN DISULFIDE-ISOMERASE C17H9.14C-RELATED"/>
    <property type="match status" value="1"/>
</dbReference>
<dbReference type="Pfam" id="PF07749">
    <property type="entry name" value="ERp29"/>
    <property type="match status" value="1"/>
</dbReference>
<dbReference type="Pfam" id="PF00085">
    <property type="entry name" value="Thioredoxin"/>
    <property type="match status" value="2"/>
</dbReference>
<dbReference type="PRINTS" id="PR00421">
    <property type="entry name" value="THIOREDOXIN"/>
</dbReference>
<dbReference type="SUPFAM" id="SSF47933">
    <property type="entry name" value="ERP29 C domain-like"/>
    <property type="match status" value="1"/>
</dbReference>
<dbReference type="SUPFAM" id="SSF52833">
    <property type="entry name" value="Thioredoxin-like"/>
    <property type="match status" value="2"/>
</dbReference>
<dbReference type="PROSITE" id="PS00014">
    <property type="entry name" value="ER_TARGET"/>
    <property type="match status" value="1"/>
</dbReference>
<dbReference type="PROSITE" id="PS00194">
    <property type="entry name" value="THIOREDOXIN_1"/>
    <property type="match status" value="2"/>
</dbReference>
<dbReference type="PROSITE" id="PS51352">
    <property type="entry name" value="THIOREDOXIN_2"/>
    <property type="match status" value="2"/>
</dbReference>
<comment type="catalytic activity">
    <reaction>
        <text>Catalyzes the rearrangement of -S-S- bonds in proteins.</text>
        <dbReference type="EC" id="5.3.4.1"/>
    </reaction>
</comment>
<comment type="subcellular location">
    <subcellularLocation>
        <location evidence="4">Endoplasmic reticulum lumen</location>
    </subcellularLocation>
</comment>
<comment type="induction">
    <text>By stress.</text>
</comment>
<comment type="similarity">
    <text evidence="5">Belongs to the protein disulfide isomerase family.</text>
</comment>
<gene>
    <name type="primary">erp38</name>
    <name type="ORF">17E5.50</name>
    <name type="ORF">NCU03739</name>
</gene>